<sequence>MASLFVSTPSSSLTLKSCHSLHLRRFDRAEFSNFGKASVNQTTRSRHSLRCSAEDDRVREPVNEAPSPVALAEEQKEDHDNNNAPPSPESSEEEEEKKSKQQEMDWKTDEEFKKFMGNPSIEAAIKLEKTRTDRKLKELNKESNSENPIIGIYNSLARDSLTKEKERLEKAEETFKALDLNKLKSCFGFDTFFATDVRRFGDGGIFIGNLRKPIDEVTPKLEAKLSEAAGRDVVVWFMEERSNEITKQVCMVQPKAEIDLQFESTRLSTPWGYVSAIALCVTTFGTIALMSGFFLKPDATFDDYIANVVPLFGGFLSILGVSEIATRVTAARHGVKLSPSFLVPSNWTGCLGVMNNYESLLPNKKALFDIPVARTASAYLTSLLLAAAAFISDGSFNGGDNALYIRPQFFDNNPLLSFVQFVVGPYADDLGNVLPNAVEGVGVPVDPLAFAGLLGMVVTSLNLLPCGRLEGGRIAQAMFGRSTAAILSFTTSLLLGIGGLSGSVLCLAWGLFATFFRGGEETPAKDEITPVGDDRFAWGIVLGLICFLTLFPNSGGTFSTSFFNGPFFRGDDF</sequence>
<proteinExistence type="evidence at protein level"/>
<evidence type="ECO:0000250" key="1"/>
<evidence type="ECO:0000255" key="2"/>
<evidence type="ECO:0000256" key="3">
    <source>
        <dbReference type="SAM" id="MobiDB-lite"/>
    </source>
</evidence>
<evidence type="ECO:0000305" key="4"/>
<dbReference type="EC" id="3.4.24.-"/>
<dbReference type="EMBL" id="AC034106">
    <property type="protein sequence ID" value="AAF97267.1"/>
    <property type="molecule type" value="Genomic_DNA"/>
</dbReference>
<dbReference type="EMBL" id="CP002684">
    <property type="protein sequence ID" value="AEE29646.1"/>
    <property type="molecule type" value="Genomic_DNA"/>
</dbReference>
<dbReference type="EMBL" id="AK226263">
    <property type="protein sequence ID" value="BAE98423.1"/>
    <property type="molecule type" value="mRNA"/>
</dbReference>
<dbReference type="PIR" id="H86313">
    <property type="entry name" value="H86313"/>
</dbReference>
<dbReference type="RefSeq" id="NP_173229.1">
    <property type="nucleotide sequence ID" value="NM_101650.3"/>
</dbReference>
<dbReference type="SMR" id="Q9LMU1"/>
<dbReference type="FunCoup" id="Q9LMU1">
    <property type="interactions" value="46"/>
</dbReference>
<dbReference type="STRING" id="3702.Q9LMU1"/>
<dbReference type="PaxDb" id="3702-AT1G17870.1"/>
<dbReference type="ProteomicsDB" id="220757"/>
<dbReference type="EnsemblPlants" id="AT1G17870.1">
    <property type="protein sequence ID" value="AT1G17870.1"/>
    <property type="gene ID" value="AT1G17870"/>
</dbReference>
<dbReference type="GeneID" id="838366"/>
<dbReference type="Gramene" id="AT1G17870.1">
    <property type="protein sequence ID" value="AT1G17870.1"/>
    <property type="gene ID" value="AT1G17870"/>
</dbReference>
<dbReference type="KEGG" id="ath:AT1G17870"/>
<dbReference type="Araport" id="AT1G17870"/>
<dbReference type="TAIR" id="AT1G17870">
    <property type="gene designation" value="EGY3"/>
</dbReference>
<dbReference type="eggNOG" id="ENOG502QQ7R">
    <property type="taxonomic scope" value="Eukaryota"/>
</dbReference>
<dbReference type="HOGENOM" id="CLU_032693_0_0_1"/>
<dbReference type="InParanoid" id="Q9LMU1"/>
<dbReference type="OMA" id="IRPQFFD"/>
<dbReference type="PhylomeDB" id="Q9LMU1"/>
<dbReference type="PRO" id="PR:Q9LMU1"/>
<dbReference type="Proteomes" id="UP000006548">
    <property type="component" value="Chromosome 1"/>
</dbReference>
<dbReference type="ExpressionAtlas" id="Q9LMU1">
    <property type="expression patterns" value="baseline and differential"/>
</dbReference>
<dbReference type="GO" id="GO:0031969">
    <property type="term" value="C:chloroplast membrane"/>
    <property type="evidence" value="ECO:0007669"/>
    <property type="project" value="UniProtKB-SubCell"/>
</dbReference>
<dbReference type="GO" id="GO:0008237">
    <property type="term" value="F:metallopeptidase activity"/>
    <property type="evidence" value="ECO:0007669"/>
    <property type="project" value="UniProtKB-KW"/>
</dbReference>
<dbReference type="GO" id="GO:0006508">
    <property type="term" value="P:proteolysis"/>
    <property type="evidence" value="ECO:0007669"/>
    <property type="project" value="UniProtKB-KW"/>
</dbReference>
<dbReference type="GO" id="GO:0009651">
    <property type="term" value="P:response to salt stress"/>
    <property type="evidence" value="ECO:0000270"/>
    <property type="project" value="TAIR"/>
</dbReference>
<dbReference type="InterPro" id="IPR044838">
    <property type="entry name" value="EGY1-like"/>
</dbReference>
<dbReference type="PANTHER" id="PTHR31412:SF2">
    <property type="entry name" value="ZINC METALLOPEPTIDASE EGY3, CHLOROPLASTIC-RELATED"/>
    <property type="match status" value="1"/>
</dbReference>
<dbReference type="PANTHER" id="PTHR31412">
    <property type="entry name" value="ZINC METALLOPROTEASE EGY1"/>
    <property type="match status" value="1"/>
</dbReference>
<reference key="1">
    <citation type="journal article" date="2000" name="Nature">
        <title>Sequence and analysis of chromosome 1 of the plant Arabidopsis thaliana.</title>
        <authorList>
            <person name="Theologis A."/>
            <person name="Ecker J.R."/>
            <person name="Palm C.J."/>
            <person name="Federspiel N.A."/>
            <person name="Kaul S."/>
            <person name="White O."/>
            <person name="Alonso J."/>
            <person name="Altafi H."/>
            <person name="Araujo R."/>
            <person name="Bowman C.L."/>
            <person name="Brooks S.Y."/>
            <person name="Buehler E."/>
            <person name="Chan A."/>
            <person name="Chao Q."/>
            <person name="Chen H."/>
            <person name="Cheuk R.F."/>
            <person name="Chin C.W."/>
            <person name="Chung M.K."/>
            <person name="Conn L."/>
            <person name="Conway A.B."/>
            <person name="Conway A.R."/>
            <person name="Creasy T.H."/>
            <person name="Dewar K."/>
            <person name="Dunn P."/>
            <person name="Etgu P."/>
            <person name="Feldblyum T.V."/>
            <person name="Feng J.-D."/>
            <person name="Fong B."/>
            <person name="Fujii C.Y."/>
            <person name="Gill J.E."/>
            <person name="Goldsmith A.D."/>
            <person name="Haas B."/>
            <person name="Hansen N.F."/>
            <person name="Hughes B."/>
            <person name="Huizar L."/>
            <person name="Hunter J.L."/>
            <person name="Jenkins J."/>
            <person name="Johnson-Hopson C."/>
            <person name="Khan S."/>
            <person name="Khaykin E."/>
            <person name="Kim C.J."/>
            <person name="Koo H.L."/>
            <person name="Kremenetskaia I."/>
            <person name="Kurtz D.B."/>
            <person name="Kwan A."/>
            <person name="Lam B."/>
            <person name="Langin-Hooper S."/>
            <person name="Lee A."/>
            <person name="Lee J.M."/>
            <person name="Lenz C.A."/>
            <person name="Li J.H."/>
            <person name="Li Y.-P."/>
            <person name="Lin X."/>
            <person name="Liu S.X."/>
            <person name="Liu Z.A."/>
            <person name="Luros J.S."/>
            <person name="Maiti R."/>
            <person name="Marziali A."/>
            <person name="Militscher J."/>
            <person name="Miranda M."/>
            <person name="Nguyen M."/>
            <person name="Nierman W.C."/>
            <person name="Osborne B.I."/>
            <person name="Pai G."/>
            <person name="Peterson J."/>
            <person name="Pham P.K."/>
            <person name="Rizzo M."/>
            <person name="Rooney T."/>
            <person name="Rowley D."/>
            <person name="Sakano H."/>
            <person name="Salzberg S.L."/>
            <person name="Schwartz J.R."/>
            <person name="Shinn P."/>
            <person name="Southwick A.M."/>
            <person name="Sun H."/>
            <person name="Tallon L.J."/>
            <person name="Tambunga G."/>
            <person name="Toriumi M.J."/>
            <person name="Town C.D."/>
            <person name="Utterback T."/>
            <person name="Van Aken S."/>
            <person name="Vaysberg M."/>
            <person name="Vysotskaia V.S."/>
            <person name="Walker M."/>
            <person name="Wu D."/>
            <person name="Yu G."/>
            <person name="Fraser C.M."/>
            <person name="Venter J.C."/>
            <person name="Davis R.W."/>
        </authorList>
    </citation>
    <scope>NUCLEOTIDE SEQUENCE [LARGE SCALE GENOMIC DNA]</scope>
    <source>
        <strain>cv. Columbia</strain>
    </source>
</reference>
<reference key="2">
    <citation type="journal article" date="2017" name="Plant J.">
        <title>Araport11: a complete reannotation of the Arabidopsis thaliana reference genome.</title>
        <authorList>
            <person name="Cheng C.Y."/>
            <person name="Krishnakumar V."/>
            <person name="Chan A.P."/>
            <person name="Thibaud-Nissen F."/>
            <person name="Schobel S."/>
            <person name="Town C.D."/>
        </authorList>
    </citation>
    <scope>GENOME REANNOTATION</scope>
    <source>
        <strain>cv. Columbia</strain>
    </source>
</reference>
<reference key="3">
    <citation type="submission" date="2006-07" db="EMBL/GenBank/DDBJ databases">
        <title>Large-scale analysis of RIKEN Arabidopsis full-length (RAFL) cDNAs.</title>
        <authorList>
            <person name="Totoki Y."/>
            <person name="Seki M."/>
            <person name="Ishida J."/>
            <person name="Nakajima M."/>
            <person name="Enju A."/>
            <person name="Kamiya A."/>
            <person name="Narusaka M."/>
            <person name="Shin-i T."/>
            <person name="Nakagawa M."/>
            <person name="Sakamoto N."/>
            <person name="Oishi K."/>
            <person name="Kohara Y."/>
            <person name="Kobayashi M."/>
            <person name="Toyoda A."/>
            <person name="Sakaki Y."/>
            <person name="Sakurai T."/>
            <person name="Iida K."/>
            <person name="Akiyama K."/>
            <person name="Satou M."/>
            <person name="Toyoda T."/>
            <person name="Konagaya A."/>
            <person name="Carninci P."/>
            <person name="Kawai J."/>
            <person name="Hayashizaki Y."/>
            <person name="Shinozaki K."/>
        </authorList>
    </citation>
    <scope>NUCLEOTIDE SEQUENCE [LARGE SCALE MRNA]</scope>
    <source>
        <strain>cv. Columbia</strain>
    </source>
</reference>
<reference key="4">
    <citation type="journal article" date="2005" name="Plant J.">
        <title>EGY1 encodes a membrane-associated and ATP-independent metalloprotease that is required for chloroplast development.</title>
        <authorList>
            <person name="Chen G."/>
            <person name="Bi Y.R."/>
            <person name="Li N."/>
        </authorList>
    </citation>
    <scope>GENE FAMILY</scope>
</reference>
<reference key="5">
    <citation type="journal article" date="2007" name="Mol. Cell. Proteomics">
        <title>Multidimensional protein identification technology (MudPIT) analysis of ubiquitinated proteins in plants.</title>
        <authorList>
            <person name="Maor R."/>
            <person name="Jones A."/>
            <person name="Nuehse T.S."/>
            <person name="Studholme D.J."/>
            <person name="Peck S.C."/>
            <person name="Shirasu K."/>
        </authorList>
    </citation>
    <scope>IDENTIFICATION BY MASS SPECTROMETRY [LARGE SCALE ANALYSIS]</scope>
    <source>
        <strain>cv. Landsberg erecta</strain>
    </source>
</reference>
<keyword id="KW-0150">Chloroplast</keyword>
<keyword id="KW-0175">Coiled coil</keyword>
<keyword id="KW-0378">Hydrolase</keyword>
<keyword id="KW-0472">Membrane</keyword>
<keyword id="KW-0482">Metalloprotease</keyword>
<keyword id="KW-0934">Plastid</keyword>
<keyword id="KW-0645">Protease</keyword>
<keyword id="KW-1185">Reference proteome</keyword>
<keyword id="KW-0809">Transit peptide</keyword>
<keyword id="KW-0812">Transmembrane</keyword>
<keyword id="KW-1133">Transmembrane helix</keyword>
<name>EGY3_ARATH</name>
<organism>
    <name type="scientific">Arabidopsis thaliana</name>
    <name type="common">Mouse-ear cress</name>
    <dbReference type="NCBI Taxonomy" id="3702"/>
    <lineage>
        <taxon>Eukaryota</taxon>
        <taxon>Viridiplantae</taxon>
        <taxon>Streptophyta</taxon>
        <taxon>Embryophyta</taxon>
        <taxon>Tracheophyta</taxon>
        <taxon>Spermatophyta</taxon>
        <taxon>Magnoliopsida</taxon>
        <taxon>eudicotyledons</taxon>
        <taxon>Gunneridae</taxon>
        <taxon>Pentapetalae</taxon>
        <taxon>rosids</taxon>
        <taxon>malvids</taxon>
        <taxon>Brassicales</taxon>
        <taxon>Brassicaceae</taxon>
        <taxon>Camelineae</taxon>
        <taxon>Arabidopsis</taxon>
    </lineage>
</organism>
<comment type="function">
    <text evidence="1">Probable membrane-associated metalloprotease that may be involved in chloroplast development.</text>
</comment>
<comment type="subcellular location">
    <subcellularLocation>
        <location evidence="4">Plastid</location>
        <location evidence="4">Chloroplast membrane</location>
        <topology evidence="4">Multi-pass membrane protein</topology>
    </subcellularLocation>
</comment>
<comment type="similarity">
    <text evidence="4">Belongs to the peptidase M50B family.</text>
</comment>
<accession>Q9LMU1</accession>
<accession>Q0WWS5</accession>
<feature type="transit peptide" description="Chloroplast" evidence="2">
    <location>
        <begin position="1"/>
        <end position="50"/>
    </location>
</feature>
<feature type="chain" id="PRO_0000428650" description="Probable zinc metallopeptidase EGY3, chloroplastic">
    <location>
        <begin position="51"/>
        <end position="573"/>
    </location>
</feature>
<feature type="transmembrane region" description="Helical" evidence="2">
    <location>
        <begin position="274"/>
        <end position="294"/>
    </location>
</feature>
<feature type="transmembrane region" description="Helical" evidence="2">
    <location>
        <begin position="305"/>
        <end position="325"/>
    </location>
</feature>
<feature type="transmembrane region" description="Helical" evidence="2">
    <location>
        <begin position="376"/>
        <end position="396"/>
    </location>
</feature>
<feature type="transmembrane region" description="Helical" evidence="2">
    <location>
        <begin position="414"/>
        <end position="434"/>
    </location>
</feature>
<feature type="transmembrane region" description="Helical" evidence="2">
    <location>
        <begin position="441"/>
        <end position="461"/>
    </location>
</feature>
<feature type="transmembrane region" description="Helical" evidence="2">
    <location>
        <begin position="493"/>
        <end position="513"/>
    </location>
</feature>
<feature type="transmembrane region" description="Helical" evidence="2">
    <location>
        <begin position="536"/>
        <end position="556"/>
    </location>
</feature>
<feature type="region of interest" description="Disordered" evidence="3">
    <location>
        <begin position="38"/>
        <end position="105"/>
    </location>
</feature>
<feature type="coiled-coil region" evidence="2">
    <location>
        <begin position="122"/>
        <end position="185"/>
    </location>
</feature>
<feature type="compositionally biased region" description="Basic and acidic residues" evidence="3">
    <location>
        <begin position="52"/>
        <end position="62"/>
    </location>
</feature>
<feature type="compositionally biased region" description="Basic and acidic residues" evidence="3">
    <location>
        <begin position="96"/>
        <end position="105"/>
    </location>
</feature>
<feature type="sequence conflict" description="In Ref. 3; BAE98423." evidence="4" ref="3">
    <original>I</original>
    <variation>M</variation>
    <location>
        <position position="405"/>
    </location>
</feature>
<protein>
    <recommendedName>
        <fullName>Probable zinc metallopeptidase EGY3, chloroplastic</fullName>
        <ecNumber>3.4.24.-</ecNumber>
    </recommendedName>
    <alternativeName>
        <fullName>Protein ETHYLENE-DEPENDENT GRAVITROPISM-DEFICIENT AND YELLOW-GREEN 3</fullName>
        <shortName>AtEGY3</shortName>
    </alternativeName>
</protein>
<gene>
    <name type="primary">EGY3</name>
    <name type="ordered locus">At1g17870</name>
    <name type="ORF">F2H15.10</name>
</gene>